<name>KCY_LIMRJ</name>
<gene>
    <name evidence="1" type="primary">cmk</name>
    <name type="ordered locus">LAR_0732</name>
</gene>
<accession>B2G716</accession>
<organism>
    <name type="scientific">Limosilactobacillus reuteri subsp. reuteri (strain JCM 1112)</name>
    <name type="common">Lactobacillus reuteri</name>
    <dbReference type="NCBI Taxonomy" id="557433"/>
    <lineage>
        <taxon>Bacteria</taxon>
        <taxon>Bacillati</taxon>
        <taxon>Bacillota</taxon>
        <taxon>Bacilli</taxon>
        <taxon>Lactobacillales</taxon>
        <taxon>Lactobacillaceae</taxon>
        <taxon>Limosilactobacillus</taxon>
    </lineage>
</organism>
<sequence>MCKGLQVAIDGPASAGKSTVAKLVAKKFNYVYCDTGAMYRAVTLAVLNQGIDPKDDKKVAEIARQIKIDFEPGEIEQRVFLDGKEVTHDIRLPKVAANVSAVAAVPAVREEMTKQQRQIAENGGIVMDGRDIGTTVLPQAPVKIFMVASAYERARRRYAENQAKGINTTSLEELQKAIELRDKKDSTRKVSPLTQAPDAIKLDTTNMTIDEVVSEISKIIKKTQDELA</sequence>
<protein>
    <recommendedName>
        <fullName evidence="1">Cytidylate kinase</fullName>
        <shortName evidence="1">CK</shortName>
        <ecNumber evidence="1">2.7.4.25</ecNumber>
    </recommendedName>
    <alternativeName>
        <fullName evidence="1">Cytidine monophosphate kinase</fullName>
        <shortName evidence="1">CMP kinase</shortName>
    </alternativeName>
</protein>
<proteinExistence type="inferred from homology"/>
<dbReference type="EC" id="2.7.4.25" evidence="1"/>
<dbReference type="EMBL" id="AP007281">
    <property type="protein sequence ID" value="BAG25248.1"/>
    <property type="molecule type" value="Genomic_DNA"/>
</dbReference>
<dbReference type="RefSeq" id="WP_003668107.1">
    <property type="nucleotide sequence ID" value="NC_010609.1"/>
</dbReference>
<dbReference type="SMR" id="B2G716"/>
<dbReference type="KEGG" id="lrf:LAR_0732"/>
<dbReference type="HOGENOM" id="CLU_079959_0_2_9"/>
<dbReference type="GO" id="GO:0005829">
    <property type="term" value="C:cytosol"/>
    <property type="evidence" value="ECO:0007669"/>
    <property type="project" value="TreeGrafter"/>
</dbReference>
<dbReference type="GO" id="GO:0005524">
    <property type="term" value="F:ATP binding"/>
    <property type="evidence" value="ECO:0007669"/>
    <property type="project" value="UniProtKB-UniRule"/>
</dbReference>
<dbReference type="GO" id="GO:0036430">
    <property type="term" value="F:CMP kinase activity"/>
    <property type="evidence" value="ECO:0007669"/>
    <property type="project" value="RHEA"/>
</dbReference>
<dbReference type="GO" id="GO:0036431">
    <property type="term" value="F:dCMP kinase activity"/>
    <property type="evidence" value="ECO:0007669"/>
    <property type="project" value="RHEA"/>
</dbReference>
<dbReference type="GO" id="GO:0015949">
    <property type="term" value="P:nucleobase-containing small molecule interconversion"/>
    <property type="evidence" value="ECO:0007669"/>
    <property type="project" value="TreeGrafter"/>
</dbReference>
<dbReference type="GO" id="GO:0006220">
    <property type="term" value="P:pyrimidine nucleotide metabolic process"/>
    <property type="evidence" value="ECO:0007669"/>
    <property type="project" value="UniProtKB-UniRule"/>
</dbReference>
<dbReference type="CDD" id="cd02020">
    <property type="entry name" value="CMPK"/>
    <property type="match status" value="1"/>
</dbReference>
<dbReference type="Gene3D" id="3.40.50.300">
    <property type="entry name" value="P-loop containing nucleotide triphosphate hydrolases"/>
    <property type="match status" value="1"/>
</dbReference>
<dbReference type="HAMAP" id="MF_00238">
    <property type="entry name" value="Cytidyl_kinase_type1"/>
    <property type="match status" value="1"/>
</dbReference>
<dbReference type="InterPro" id="IPR003136">
    <property type="entry name" value="Cytidylate_kin"/>
</dbReference>
<dbReference type="InterPro" id="IPR011994">
    <property type="entry name" value="Cytidylate_kinase_dom"/>
</dbReference>
<dbReference type="InterPro" id="IPR027417">
    <property type="entry name" value="P-loop_NTPase"/>
</dbReference>
<dbReference type="NCBIfam" id="TIGR00017">
    <property type="entry name" value="cmk"/>
    <property type="match status" value="1"/>
</dbReference>
<dbReference type="PANTHER" id="PTHR21299:SF2">
    <property type="entry name" value="CYTIDYLATE KINASE"/>
    <property type="match status" value="1"/>
</dbReference>
<dbReference type="PANTHER" id="PTHR21299">
    <property type="entry name" value="CYTIDYLATE KINASE/PANTOATE-BETA-ALANINE LIGASE"/>
    <property type="match status" value="1"/>
</dbReference>
<dbReference type="Pfam" id="PF02224">
    <property type="entry name" value="Cytidylate_kin"/>
    <property type="match status" value="1"/>
</dbReference>
<dbReference type="SUPFAM" id="SSF52540">
    <property type="entry name" value="P-loop containing nucleoside triphosphate hydrolases"/>
    <property type="match status" value="1"/>
</dbReference>
<keyword id="KW-0067">ATP-binding</keyword>
<keyword id="KW-0963">Cytoplasm</keyword>
<keyword id="KW-0418">Kinase</keyword>
<keyword id="KW-0547">Nucleotide-binding</keyword>
<keyword id="KW-0808">Transferase</keyword>
<reference key="1">
    <citation type="journal article" date="2008" name="DNA Res.">
        <title>Comparative genome analysis of Lactobacillus reuteri and Lactobacillus fermentum reveal a genomic island for reuterin and cobalamin production.</title>
        <authorList>
            <person name="Morita H."/>
            <person name="Toh H."/>
            <person name="Fukuda S."/>
            <person name="Horikawa H."/>
            <person name="Oshima K."/>
            <person name="Suzuki T."/>
            <person name="Murakami M."/>
            <person name="Hisamatsu S."/>
            <person name="Kato Y."/>
            <person name="Takizawa T."/>
            <person name="Fukuoka H."/>
            <person name="Yoshimura T."/>
            <person name="Itoh K."/>
            <person name="O'Sullivan D.J."/>
            <person name="McKay L.L."/>
            <person name="Ohno H."/>
            <person name="Kikuchi J."/>
            <person name="Masaoka T."/>
            <person name="Hattori M."/>
        </authorList>
    </citation>
    <scope>NUCLEOTIDE SEQUENCE [LARGE SCALE GENOMIC DNA]</scope>
    <source>
        <strain>JCM 1112</strain>
    </source>
</reference>
<evidence type="ECO:0000255" key="1">
    <source>
        <dbReference type="HAMAP-Rule" id="MF_00238"/>
    </source>
</evidence>
<comment type="catalytic activity">
    <reaction evidence="1">
        <text>CMP + ATP = CDP + ADP</text>
        <dbReference type="Rhea" id="RHEA:11600"/>
        <dbReference type="ChEBI" id="CHEBI:30616"/>
        <dbReference type="ChEBI" id="CHEBI:58069"/>
        <dbReference type="ChEBI" id="CHEBI:60377"/>
        <dbReference type="ChEBI" id="CHEBI:456216"/>
        <dbReference type="EC" id="2.7.4.25"/>
    </reaction>
</comment>
<comment type="catalytic activity">
    <reaction evidence="1">
        <text>dCMP + ATP = dCDP + ADP</text>
        <dbReference type="Rhea" id="RHEA:25094"/>
        <dbReference type="ChEBI" id="CHEBI:30616"/>
        <dbReference type="ChEBI" id="CHEBI:57566"/>
        <dbReference type="ChEBI" id="CHEBI:58593"/>
        <dbReference type="ChEBI" id="CHEBI:456216"/>
        <dbReference type="EC" id="2.7.4.25"/>
    </reaction>
</comment>
<comment type="subcellular location">
    <subcellularLocation>
        <location evidence="1">Cytoplasm</location>
    </subcellularLocation>
</comment>
<comment type="similarity">
    <text evidence="1">Belongs to the cytidylate kinase family. Type 1 subfamily.</text>
</comment>
<feature type="chain" id="PRO_1000119021" description="Cytidylate kinase">
    <location>
        <begin position="1"/>
        <end position="228"/>
    </location>
</feature>
<feature type="binding site" evidence="1">
    <location>
        <begin position="11"/>
        <end position="19"/>
    </location>
    <ligand>
        <name>ATP</name>
        <dbReference type="ChEBI" id="CHEBI:30616"/>
    </ligand>
</feature>